<gene>
    <name evidence="1" type="primary">pyrD</name>
    <name type="ordered locus">BCG_2156</name>
</gene>
<feature type="chain" id="PRO_1000024185" description="Dihydroorotate dehydrogenase (quinone)">
    <location>
        <begin position="1"/>
        <end position="357"/>
    </location>
</feature>
<feature type="active site" description="Nucleophile" evidence="1">
    <location>
        <position position="179"/>
    </location>
</feature>
<feature type="binding site" evidence="1">
    <location>
        <begin position="66"/>
        <end position="70"/>
    </location>
    <ligand>
        <name>FMN</name>
        <dbReference type="ChEBI" id="CHEBI:58210"/>
    </ligand>
</feature>
<feature type="binding site" evidence="1">
    <location>
        <position position="70"/>
    </location>
    <ligand>
        <name>substrate</name>
    </ligand>
</feature>
<feature type="binding site" evidence="1">
    <location>
        <position position="90"/>
    </location>
    <ligand>
        <name>FMN</name>
        <dbReference type="ChEBI" id="CHEBI:58210"/>
    </ligand>
</feature>
<feature type="binding site" evidence="1">
    <location>
        <begin position="115"/>
        <end position="119"/>
    </location>
    <ligand>
        <name>substrate</name>
    </ligand>
</feature>
<feature type="binding site" evidence="1">
    <location>
        <position position="143"/>
    </location>
    <ligand>
        <name>FMN</name>
        <dbReference type="ChEBI" id="CHEBI:58210"/>
    </ligand>
</feature>
<feature type="binding site" evidence="1">
    <location>
        <position position="176"/>
    </location>
    <ligand>
        <name>FMN</name>
        <dbReference type="ChEBI" id="CHEBI:58210"/>
    </ligand>
</feature>
<feature type="binding site" evidence="1">
    <location>
        <position position="176"/>
    </location>
    <ligand>
        <name>substrate</name>
    </ligand>
</feature>
<feature type="binding site" evidence="1">
    <location>
        <position position="181"/>
    </location>
    <ligand>
        <name>substrate</name>
    </ligand>
</feature>
<feature type="binding site" evidence="1">
    <location>
        <position position="212"/>
    </location>
    <ligand>
        <name>FMN</name>
        <dbReference type="ChEBI" id="CHEBI:58210"/>
    </ligand>
</feature>
<feature type="binding site" evidence="1">
    <location>
        <position position="240"/>
    </location>
    <ligand>
        <name>FMN</name>
        <dbReference type="ChEBI" id="CHEBI:58210"/>
    </ligand>
</feature>
<feature type="binding site" evidence="1">
    <location>
        <begin position="241"/>
        <end position="242"/>
    </location>
    <ligand>
        <name>substrate</name>
    </ligand>
</feature>
<feature type="binding site" evidence="1">
    <location>
        <position position="264"/>
    </location>
    <ligand>
        <name>FMN</name>
        <dbReference type="ChEBI" id="CHEBI:58210"/>
    </ligand>
</feature>
<feature type="binding site" evidence="1">
    <location>
        <position position="293"/>
    </location>
    <ligand>
        <name>FMN</name>
        <dbReference type="ChEBI" id="CHEBI:58210"/>
    </ligand>
</feature>
<feature type="binding site" evidence="1">
    <location>
        <begin position="314"/>
        <end position="315"/>
    </location>
    <ligand>
        <name>FMN</name>
        <dbReference type="ChEBI" id="CHEBI:58210"/>
    </ligand>
</feature>
<proteinExistence type="inferred from homology"/>
<evidence type="ECO:0000255" key="1">
    <source>
        <dbReference type="HAMAP-Rule" id="MF_00225"/>
    </source>
</evidence>
<name>PYRD_MYCBP</name>
<dbReference type="EC" id="1.3.5.2" evidence="1"/>
<dbReference type="EMBL" id="AM408590">
    <property type="protein sequence ID" value="CAL72144.1"/>
    <property type="molecule type" value="Genomic_DNA"/>
</dbReference>
<dbReference type="RefSeq" id="WP_011799246.1">
    <property type="nucleotide sequence ID" value="NC_008769.1"/>
</dbReference>
<dbReference type="SMR" id="A1KKI2"/>
<dbReference type="KEGG" id="mbb:BCG_2156"/>
<dbReference type="HOGENOM" id="CLU_013640_2_0_11"/>
<dbReference type="UniPathway" id="UPA00070">
    <property type="reaction ID" value="UER00946"/>
</dbReference>
<dbReference type="Proteomes" id="UP000001472">
    <property type="component" value="Chromosome"/>
</dbReference>
<dbReference type="GO" id="GO:0005737">
    <property type="term" value="C:cytoplasm"/>
    <property type="evidence" value="ECO:0007669"/>
    <property type="project" value="InterPro"/>
</dbReference>
<dbReference type="GO" id="GO:0005886">
    <property type="term" value="C:plasma membrane"/>
    <property type="evidence" value="ECO:0007669"/>
    <property type="project" value="UniProtKB-SubCell"/>
</dbReference>
<dbReference type="GO" id="GO:0106430">
    <property type="term" value="F:dihydroorotate dehydrogenase (quinone) activity"/>
    <property type="evidence" value="ECO:0007669"/>
    <property type="project" value="UniProtKB-EC"/>
</dbReference>
<dbReference type="GO" id="GO:0006207">
    <property type="term" value="P:'de novo' pyrimidine nucleobase biosynthetic process"/>
    <property type="evidence" value="ECO:0007669"/>
    <property type="project" value="InterPro"/>
</dbReference>
<dbReference type="GO" id="GO:0044205">
    <property type="term" value="P:'de novo' UMP biosynthetic process"/>
    <property type="evidence" value="ECO:0007669"/>
    <property type="project" value="UniProtKB-UniRule"/>
</dbReference>
<dbReference type="CDD" id="cd04738">
    <property type="entry name" value="DHOD_2_like"/>
    <property type="match status" value="1"/>
</dbReference>
<dbReference type="FunFam" id="3.20.20.70:FF:000123">
    <property type="entry name" value="Dihydroorotate dehydrogenase (quinone)"/>
    <property type="match status" value="1"/>
</dbReference>
<dbReference type="Gene3D" id="3.20.20.70">
    <property type="entry name" value="Aldolase class I"/>
    <property type="match status" value="1"/>
</dbReference>
<dbReference type="HAMAP" id="MF_00225">
    <property type="entry name" value="DHO_dh_type2"/>
    <property type="match status" value="1"/>
</dbReference>
<dbReference type="InterPro" id="IPR013785">
    <property type="entry name" value="Aldolase_TIM"/>
</dbReference>
<dbReference type="InterPro" id="IPR050074">
    <property type="entry name" value="DHO_dehydrogenase"/>
</dbReference>
<dbReference type="InterPro" id="IPR005719">
    <property type="entry name" value="Dihydroorotate_DH_2"/>
</dbReference>
<dbReference type="InterPro" id="IPR005720">
    <property type="entry name" value="Dihydroorotate_DH_cat"/>
</dbReference>
<dbReference type="InterPro" id="IPR001295">
    <property type="entry name" value="Dihydroorotate_DH_CS"/>
</dbReference>
<dbReference type="NCBIfam" id="NF003645">
    <property type="entry name" value="PRK05286.1-2"/>
    <property type="match status" value="1"/>
</dbReference>
<dbReference type="NCBIfam" id="NF003648">
    <property type="entry name" value="PRK05286.2-1"/>
    <property type="match status" value="1"/>
</dbReference>
<dbReference type="NCBIfam" id="NF003652">
    <property type="entry name" value="PRK05286.2-5"/>
    <property type="match status" value="1"/>
</dbReference>
<dbReference type="NCBIfam" id="TIGR01036">
    <property type="entry name" value="pyrD_sub2"/>
    <property type="match status" value="1"/>
</dbReference>
<dbReference type="PANTHER" id="PTHR48109:SF4">
    <property type="entry name" value="DIHYDROOROTATE DEHYDROGENASE (QUINONE), MITOCHONDRIAL"/>
    <property type="match status" value="1"/>
</dbReference>
<dbReference type="PANTHER" id="PTHR48109">
    <property type="entry name" value="DIHYDROOROTATE DEHYDROGENASE (QUINONE), MITOCHONDRIAL-RELATED"/>
    <property type="match status" value="1"/>
</dbReference>
<dbReference type="Pfam" id="PF01180">
    <property type="entry name" value="DHO_dh"/>
    <property type="match status" value="1"/>
</dbReference>
<dbReference type="SUPFAM" id="SSF51395">
    <property type="entry name" value="FMN-linked oxidoreductases"/>
    <property type="match status" value="1"/>
</dbReference>
<dbReference type="PROSITE" id="PS00911">
    <property type="entry name" value="DHODEHASE_1"/>
    <property type="match status" value="1"/>
</dbReference>
<dbReference type="PROSITE" id="PS00912">
    <property type="entry name" value="DHODEHASE_2"/>
    <property type="match status" value="1"/>
</dbReference>
<accession>A1KKI2</accession>
<comment type="function">
    <text evidence="1">Catalyzes the conversion of dihydroorotate to orotate with quinone as electron acceptor.</text>
</comment>
<comment type="catalytic activity">
    <reaction evidence="1">
        <text>(S)-dihydroorotate + a quinone = orotate + a quinol</text>
        <dbReference type="Rhea" id="RHEA:30187"/>
        <dbReference type="ChEBI" id="CHEBI:24646"/>
        <dbReference type="ChEBI" id="CHEBI:30839"/>
        <dbReference type="ChEBI" id="CHEBI:30864"/>
        <dbReference type="ChEBI" id="CHEBI:132124"/>
        <dbReference type="EC" id="1.3.5.2"/>
    </reaction>
</comment>
<comment type="cofactor">
    <cofactor evidence="1">
        <name>FMN</name>
        <dbReference type="ChEBI" id="CHEBI:58210"/>
    </cofactor>
    <text evidence="1">Binds 1 FMN per subunit.</text>
</comment>
<comment type="pathway">
    <text evidence="1">Pyrimidine metabolism; UMP biosynthesis via de novo pathway; orotate from (S)-dihydroorotate (quinone route): step 1/1.</text>
</comment>
<comment type="subunit">
    <text evidence="1">Monomer.</text>
</comment>
<comment type="subcellular location">
    <subcellularLocation>
        <location evidence="1">Cell membrane</location>
        <topology evidence="1">Peripheral membrane protein</topology>
    </subcellularLocation>
</comment>
<comment type="similarity">
    <text evidence="1">Belongs to the dihydroorotate dehydrogenase family. Type 2 subfamily.</text>
</comment>
<keyword id="KW-1003">Cell membrane</keyword>
<keyword id="KW-0285">Flavoprotein</keyword>
<keyword id="KW-0288">FMN</keyword>
<keyword id="KW-0472">Membrane</keyword>
<keyword id="KW-0560">Oxidoreductase</keyword>
<keyword id="KW-0665">Pyrimidine biosynthesis</keyword>
<organism>
    <name type="scientific">Mycobacterium bovis (strain BCG / Pasteur 1173P2)</name>
    <dbReference type="NCBI Taxonomy" id="410289"/>
    <lineage>
        <taxon>Bacteria</taxon>
        <taxon>Bacillati</taxon>
        <taxon>Actinomycetota</taxon>
        <taxon>Actinomycetes</taxon>
        <taxon>Mycobacteriales</taxon>
        <taxon>Mycobacteriaceae</taxon>
        <taxon>Mycobacterium</taxon>
        <taxon>Mycobacterium tuberculosis complex</taxon>
    </lineage>
</organism>
<protein>
    <recommendedName>
        <fullName evidence="1">Dihydroorotate dehydrogenase (quinone)</fullName>
        <ecNumber evidence="1">1.3.5.2</ecNumber>
    </recommendedName>
    <alternativeName>
        <fullName evidence="1">DHOdehase</fullName>
        <shortName evidence="1">DHOD</shortName>
        <shortName evidence="1">DHODase</shortName>
    </alternativeName>
    <alternativeName>
        <fullName evidence="1">Dihydroorotate oxidase</fullName>
    </alternativeName>
</protein>
<reference key="1">
    <citation type="journal article" date="2007" name="Proc. Natl. Acad. Sci. U.S.A.">
        <title>Genome plasticity of BCG and impact on vaccine efficacy.</title>
        <authorList>
            <person name="Brosch R."/>
            <person name="Gordon S.V."/>
            <person name="Garnier T."/>
            <person name="Eiglmeier K."/>
            <person name="Frigui W."/>
            <person name="Valenti P."/>
            <person name="Dos Santos S."/>
            <person name="Duthoy S."/>
            <person name="Lacroix C."/>
            <person name="Garcia-Pelayo C."/>
            <person name="Inwald J.K."/>
            <person name="Golby P."/>
            <person name="Garcia J.N."/>
            <person name="Hewinson R.G."/>
            <person name="Behr M.A."/>
            <person name="Quail M.A."/>
            <person name="Churcher C."/>
            <person name="Barrell B.G."/>
            <person name="Parkhill J."/>
            <person name="Cole S.T."/>
        </authorList>
    </citation>
    <scope>NUCLEOTIDE SEQUENCE [LARGE SCALE GENOMIC DNA]</scope>
    <source>
        <strain>BCG / Pasteur 1173P2</strain>
    </source>
</reference>
<sequence>MYPLVRRLLFLIPPEHAHKLVFAVLRGVAAVAPVCRLLRRLLGPTDPVLASTVFGVRFPAPLGLAAGFDKDGTALSSWGAMGFGYAEIGTVTAHPQPGNPAPRLFRLADDRALLNRMGFNNHGARALAIRLARHRPEIPIGVNIGKTKKTPAGDAVNDYRASARMVGPLASYLVVNVSSPNTPGLRDLQAVESLRPILSAVRAETSTPVLVKIAPDLSDSDLDDIADLAVELDLAGIVATNTTVSRDGLTTPGVDRLGPGGISGPPLAQRAVQVLRRLYDRVGDRLALISVGGIETADDAWERITAGASLLQGYTGFIYGGERWAKDIHEGIARRLHDGGFGSLHEAVGSARRRQPS</sequence>